<protein>
    <recommendedName>
        <fullName evidence="1">Undecaprenyl phosphate-alpha-4-amino-4-deoxy-L-arabinose arabinosyl transferase</fullName>
        <ecNumber evidence="1">2.4.2.43</ecNumber>
    </recommendedName>
    <alternativeName>
        <fullName evidence="1">4-amino-4-deoxy-L-arabinose lipid A transferase</fullName>
    </alternativeName>
    <alternativeName>
        <fullName evidence="1">Lipid IV(A) 4-amino-4-deoxy-L-arabinosyltransferase</fullName>
    </alternativeName>
    <alternativeName>
        <fullName evidence="1">Undecaprenyl phosphate-alpha-L-Ara4N transferase</fullName>
    </alternativeName>
</protein>
<comment type="function">
    <text evidence="1">Catalyzes the transfer of the L-Ara4N moiety of the glycolipid undecaprenyl phosphate-alpha-L-Ara4N to lipid A. The modified arabinose is attached to lipid A and is required for resistance to polymyxin and cationic antimicrobial peptides.</text>
</comment>
<comment type="catalytic activity">
    <reaction evidence="1">
        <text>4-amino-4-deoxy-alpha-L-arabinopyranosyl di-trans,octa-cis-undecaprenyl phosphate + lipid IVA = lipid IIA + di-trans,octa-cis-undecaprenyl phosphate.</text>
        <dbReference type="EC" id="2.4.2.43"/>
    </reaction>
</comment>
<comment type="pathway">
    <text evidence="1">Lipopolysaccharide metabolism; 4-amino-4-deoxy-beta-L-arabinose-lipid A biosynthesis.</text>
</comment>
<comment type="subcellular location">
    <subcellularLocation>
        <location evidence="1">Cell inner membrane</location>
        <topology evidence="1">Multi-pass membrane protein</topology>
    </subcellularLocation>
</comment>
<comment type="similarity">
    <text evidence="1">Belongs to the glycosyltransferase 83 family.</text>
</comment>
<comment type="sequence caution" evidence="2">
    <conflict type="erroneous initiation">
        <sequence resource="EMBL-CDS" id="AAX66208"/>
    </conflict>
</comment>
<feature type="chain" id="PRO_0000121509" description="Undecaprenyl phosphate-alpha-4-amino-4-deoxy-L-arabinose arabinosyl transferase">
    <location>
        <begin position="1"/>
        <end position="547"/>
    </location>
</feature>
<feature type="transmembrane region" description="Helical" evidence="1">
    <location>
        <begin position="8"/>
        <end position="28"/>
    </location>
</feature>
<feature type="transmembrane region" description="Helical" evidence="1">
    <location>
        <begin position="81"/>
        <end position="101"/>
    </location>
</feature>
<feature type="transmembrane region" description="Helical" evidence="1">
    <location>
        <begin position="113"/>
        <end position="133"/>
    </location>
</feature>
<feature type="transmembrane region" description="Helical" evidence="1">
    <location>
        <begin position="176"/>
        <end position="196"/>
    </location>
</feature>
<feature type="transmembrane region" description="Helical" evidence="1">
    <location>
        <begin position="204"/>
        <end position="224"/>
    </location>
</feature>
<feature type="transmembrane region" description="Helical" evidence="1">
    <location>
        <begin position="255"/>
        <end position="275"/>
    </location>
</feature>
<feature type="transmembrane region" description="Helical" evidence="1">
    <location>
        <begin position="288"/>
        <end position="308"/>
    </location>
</feature>
<feature type="transmembrane region" description="Helical" evidence="1">
    <location>
        <begin position="310"/>
        <end position="330"/>
    </location>
</feature>
<feature type="transmembrane region" description="Helical" evidence="1">
    <location>
        <begin position="344"/>
        <end position="364"/>
    </location>
</feature>
<feature type="transmembrane region" description="Helical" evidence="1">
    <location>
        <begin position="380"/>
        <end position="400"/>
    </location>
</feature>
<feature type="transmembrane region" description="Helical" evidence="1">
    <location>
        <begin position="404"/>
        <end position="424"/>
    </location>
</feature>
<reference key="1">
    <citation type="journal article" date="2005" name="Nucleic Acids Res.">
        <title>The genome sequence of Salmonella enterica serovar Choleraesuis, a highly invasive and resistant zoonotic pathogen.</title>
        <authorList>
            <person name="Chiu C.-H."/>
            <person name="Tang P."/>
            <person name="Chu C."/>
            <person name="Hu S."/>
            <person name="Bao Q."/>
            <person name="Yu J."/>
            <person name="Chou Y.-Y."/>
            <person name="Wang H.-S."/>
            <person name="Lee Y.-S."/>
        </authorList>
    </citation>
    <scope>NUCLEOTIDE SEQUENCE [LARGE SCALE GENOMIC DNA]</scope>
    <source>
        <strain>SC-B67</strain>
    </source>
</reference>
<name>ARNT_SALCH</name>
<keyword id="KW-0997">Cell inner membrane</keyword>
<keyword id="KW-1003">Cell membrane</keyword>
<keyword id="KW-0328">Glycosyltransferase</keyword>
<keyword id="KW-0441">Lipid A biosynthesis</keyword>
<keyword id="KW-0444">Lipid biosynthesis</keyword>
<keyword id="KW-0443">Lipid metabolism</keyword>
<keyword id="KW-0448">Lipopolysaccharide biosynthesis</keyword>
<keyword id="KW-0472">Membrane</keyword>
<keyword id="KW-0808">Transferase</keyword>
<keyword id="KW-0812">Transmembrane</keyword>
<keyword id="KW-1133">Transmembrane helix</keyword>
<accession>Q57M54</accession>
<gene>
    <name evidence="1" type="primary">arnT</name>
    <name type="ordered locus">SCH_2302</name>
</gene>
<sequence>MKSIRYYLAFAAFIALYYVIPVNSRLLWQPDETRYAEISREMLASGDWIVPHFLGLRYFEKPIAGYWINRLGQWLFGATNFGVRAGAILTTLLAAALVAWLTFRLWRDKRTALLASVIFLSLFAVYSIGTYAVLDPMIALWLTAGMCCFWQGMQATTRTGKIGMFLLLGATCGLGVLTKGFLALAVPVVSVLPWVIVQKRWKDFLLYGWLAVLSCFVVVLPWAIAIAQREADFWHYFFWVEHIQRFAMSDAQHKAPFWYYLPVLLAGSLPWLGLLPGALKLGWRERNGAFYLLGWTIMPLLFFSIAKGKLPTYVLSCFAPIAILMARFVLHNVKEGIAALRVNGGINLVFGLVGIVTAFVVSSWGPLKSPVWTHIETYKVFCVWGVFTVWAFVGWYSLCHSQKYLLPAFCPLGLALLFGFSVPDRVMESKQPQFFVEMTQAPLASSRYILADSVGVAAGLAWSLKRDDIMLYGHAGELRYGLSYPDVQNKFVKADDFNAWLNQHRQEGIITLVLSIDKDEDISALSLPPADNVDYQGRLVLIQYRPK</sequence>
<evidence type="ECO:0000255" key="1">
    <source>
        <dbReference type="HAMAP-Rule" id="MF_01165"/>
    </source>
</evidence>
<evidence type="ECO:0000305" key="2"/>
<organism>
    <name type="scientific">Salmonella choleraesuis (strain SC-B67)</name>
    <dbReference type="NCBI Taxonomy" id="321314"/>
    <lineage>
        <taxon>Bacteria</taxon>
        <taxon>Pseudomonadati</taxon>
        <taxon>Pseudomonadota</taxon>
        <taxon>Gammaproteobacteria</taxon>
        <taxon>Enterobacterales</taxon>
        <taxon>Enterobacteriaceae</taxon>
        <taxon>Salmonella</taxon>
    </lineage>
</organism>
<proteinExistence type="inferred from homology"/>
<dbReference type="EC" id="2.4.2.43" evidence="1"/>
<dbReference type="EMBL" id="AE017220">
    <property type="protein sequence ID" value="AAX66208.1"/>
    <property type="status" value="ALT_INIT"/>
    <property type="molecule type" value="Genomic_DNA"/>
</dbReference>
<dbReference type="SMR" id="Q57M54"/>
<dbReference type="CAZy" id="GT83">
    <property type="family name" value="Glycosyltransferase Family 83"/>
</dbReference>
<dbReference type="KEGG" id="sec:SCH_2302"/>
<dbReference type="HOGENOM" id="CLU_019200_2_1_6"/>
<dbReference type="UniPathway" id="UPA00037"/>
<dbReference type="Proteomes" id="UP000000538">
    <property type="component" value="Chromosome"/>
</dbReference>
<dbReference type="GO" id="GO:0005886">
    <property type="term" value="C:plasma membrane"/>
    <property type="evidence" value="ECO:0007669"/>
    <property type="project" value="UniProtKB-SubCell"/>
</dbReference>
<dbReference type="GO" id="GO:0103015">
    <property type="term" value="F:4-amino-4-deoxy-L-arabinose transferase activity"/>
    <property type="evidence" value="ECO:0007669"/>
    <property type="project" value="UniProtKB-EC"/>
</dbReference>
<dbReference type="GO" id="GO:0000030">
    <property type="term" value="F:mannosyltransferase activity"/>
    <property type="evidence" value="ECO:0007669"/>
    <property type="project" value="InterPro"/>
</dbReference>
<dbReference type="GO" id="GO:0009245">
    <property type="term" value="P:lipid A biosynthetic process"/>
    <property type="evidence" value="ECO:0007669"/>
    <property type="project" value="UniProtKB-UniRule"/>
</dbReference>
<dbReference type="GO" id="GO:0009103">
    <property type="term" value="P:lipopolysaccharide biosynthetic process"/>
    <property type="evidence" value="ECO:0007669"/>
    <property type="project" value="UniProtKB-KW"/>
</dbReference>
<dbReference type="GO" id="GO:0006493">
    <property type="term" value="P:protein O-linked glycosylation"/>
    <property type="evidence" value="ECO:0007669"/>
    <property type="project" value="InterPro"/>
</dbReference>
<dbReference type="GO" id="GO:0010041">
    <property type="term" value="P:response to iron(III) ion"/>
    <property type="evidence" value="ECO:0007669"/>
    <property type="project" value="TreeGrafter"/>
</dbReference>
<dbReference type="HAMAP" id="MF_01165">
    <property type="entry name" value="ArnT_transfer"/>
    <property type="match status" value="1"/>
</dbReference>
<dbReference type="InterPro" id="IPR022839">
    <property type="entry name" value="ArnT_tfrase"/>
</dbReference>
<dbReference type="InterPro" id="IPR003342">
    <property type="entry name" value="Glyco_trans_39/83"/>
</dbReference>
<dbReference type="InterPro" id="IPR050297">
    <property type="entry name" value="LipidA_mod_glycosyltrf_83"/>
</dbReference>
<dbReference type="NCBIfam" id="NF009784">
    <property type="entry name" value="PRK13279.1"/>
    <property type="match status" value="1"/>
</dbReference>
<dbReference type="PANTHER" id="PTHR33908">
    <property type="entry name" value="MANNOSYLTRANSFERASE YKCB-RELATED"/>
    <property type="match status" value="1"/>
</dbReference>
<dbReference type="PANTHER" id="PTHR33908:SF3">
    <property type="entry name" value="UNDECAPRENYL PHOSPHATE-ALPHA-4-AMINO-4-DEOXY-L-ARABINOSE ARABINOSYL TRANSFERASE"/>
    <property type="match status" value="1"/>
</dbReference>
<dbReference type="Pfam" id="PF02366">
    <property type="entry name" value="PMT"/>
    <property type="match status" value="1"/>
</dbReference>